<evidence type="ECO:0000255" key="1">
    <source>
        <dbReference type="HAMAP-Rule" id="MF_01454"/>
    </source>
</evidence>
<evidence type="ECO:0000255" key="2">
    <source>
        <dbReference type="PROSITE-ProRule" id="PRU01229"/>
    </source>
</evidence>
<evidence type="ECO:0000255" key="3">
    <source>
        <dbReference type="PROSITE-ProRule" id="PRU01231"/>
    </source>
</evidence>
<protein>
    <recommendedName>
        <fullName evidence="1">GTPase Obg</fullName>
        <ecNumber evidence="1">3.6.5.-</ecNumber>
    </recommendedName>
    <alternativeName>
        <fullName evidence="1">GTP-binding protein Obg</fullName>
    </alternativeName>
</protein>
<sequence length="436" mass="48349">MSMFLDTAKIKVKAGNGGDGMVAFRREKYVPNGGPWGGDGGRGGNVVFVVDEGLRTLMDFRYNRHFKADSGEKGMTKGMHGRGAEDLRVRVPQGTTVRDAETGKVLTDLIEHGQEFIVAHGGRGGRGNIRFATPKNPAPEISENGEPGQERELQLELKILADVGLVGFPSVGKSTLLSVITSAKPKIGAYHFTTIVPNLGMVRTQSGESFAVADLPGLIEGASQGVGLGTQFLRHIERTRVILHIIDMSASEGRDPYEDYLAINKELESYNLRLMERPQIIVANKMDMPESQENLEDFKKKLAENYDEFEELPAIFPISGLTKQGLATLLDATAELLDKTPEFLLYDESDMEEEAYYGFDEEEKAFEISRDDDATWVLSGEKLMKLFNMTNFDRDESVMKFARQLRGMGVDEALRARGAKDGDLVRIGKFEFEFVD</sequence>
<organism>
    <name type="scientific">Streptococcus pneumoniae (strain CGSP14)</name>
    <dbReference type="NCBI Taxonomy" id="516950"/>
    <lineage>
        <taxon>Bacteria</taxon>
        <taxon>Bacillati</taxon>
        <taxon>Bacillota</taxon>
        <taxon>Bacilli</taxon>
        <taxon>Lactobacillales</taxon>
        <taxon>Streptococcaceae</taxon>
        <taxon>Streptococcus</taxon>
    </lineage>
</organism>
<dbReference type="EC" id="3.6.5.-" evidence="1"/>
<dbReference type="EMBL" id="CP001033">
    <property type="protein sequence ID" value="ACB90453.1"/>
    <property type="molecule type" value="Genomic_DNA"/>
</dbReference>
<dbReference type="SMR" id="B2IQ29"/>
<dbReference type="KEGG" id="spw:SPCG_1201"/>
<dbReference type="HOGENOM" id="CLU_011747_2_1_9"/>
<dbReference type="GO" id="GO:0005737">
    <property type="term" value="C:cytoplasm"/>
    <property type="evidence" value="ECO:0007669"/>
    <property type="project" value="UniProtKB-SubCell"/>
</dbReference>
<dbReference type="GO" id="GO:0005525">
    <property type="term" value="F:GTP binding"/>
    <property type="evidence" value="ECO:0007669"/>
    <property type="project" value="UniProtKB-UniRule"/>
</dbReference>
<dbReference type="GO" id="GO:0003924">
    <property type="term" value="F:GTPase activity"/>
    <property type="evidence" value="ECO:0007669"/>
    <property type="project" value="UniProtKB-UniRule"/>
</dbReference>
<dbReference type="GO" id="GO:0000287">
    <property type="term" value="F:magnesium ion binding"/>
    <property type="evidence" value="ECO:0007669"/>
    <property type="project" value="InterPro"/>
</dbReference>
<dbReference type="GO" id="GO:0042254">
    <property type="term" value="P:ribosome biogenesis"/>
    <property type="evidence" value="ECO:0007669"/>
    <property type="project" value="UniProtKB-UniRule"/>
</dbReference>
<dbReference type="CDD" id="cd01898">
    <property type="entry name" value="Obg"/>
    <property type="match status" value="1"/>
</dbReference>
<dbReference type="FunFam" id="2.70.210.12:FF:000001">
    <property type="entry name" value="GTPase Obg"/>
    <property type="match status" value="1"/>
</dbReference>
<dbReference type="FunFam" id="3.40.50.300:FF:000515">
    <property type="entry name" value="GTPase Obg"/>
    <property type="match status" value="1"/>
</dbReference>
<dbReference type="Gene3D" id="3.30.300.350">
    <property type="entry name" value="GTP-binding protein OBG, C-terminal domain"/>
    <property type="match status" value="1"/>
</dbReference>
<dbReference type="Gene3D" id="2.70.210.12">
    <property type="entry name" value="GTP1/OBG domain"/>
    <property type="match status" value="1"/>
</dbReference>
<dbReference type="Gene3D" id="3.40.50.300">
    <property type="entry name" value="P-loop containing nucleotide triphosphate hydrolases"/>
    <property type="match status" value="1"/>
</dbReference>
<dbReference type="HAMAP" id="MF_01454">
    <property type="entry name" value="GTPase_Obg"/>
    <property type="match status" value="1"/>
</dbReference>
<dbReference type="InterPro" id="IPR031167">
    <property type="entry name" value="G_OBG"/>
</dbReference>
<dbReference type="InterPro" id="IPR006073">
    <property type="entry name" value="GTP-bd"/>
</dbReference>
<dbReference type="InterPro" id="IPR014100">
    <property type="entry name" value="GTP-bd_Obg/CgtA"/>
</dbReference>
<dbReference type="InterPro" id="IPR036346">
    <property type="entry name" value="GTP-bd_prot_GTP1/OBG_C_sf"/>
</dbReference>
<dbReference type="InterPro" id="IPR006074">
    <property type="entry name" value="GTP1-OBG_CS"/>
</dbReference>
<dbReference type="InterPro" id="IPR006169">
    <property type="entry name" value="GTP1_OBG_dom"/>
</dbReference>
<dbReference type="InterPro" id="IPR036726">
    <property type="entry name" value="GTP1_OBG_dom_sf"/>
</dbReference>
<dbReference type="InterPro" id="IPR045086">
    <property type="entry name" value="OBG_GTPase"/>
</dbReference>
<dbReference type="InterPro" id="IPR015349">
    <property type="entry name" value="OCT_dom"/>
</dbReference>
<dbReference type="InterPro" id="IPR027417">
    <property type="entry name" value="P-loop_NTPase"/>
</dbReference>
<dbReference type="InterPro" id="IPR005225">
    <property type="entry name" value="Small_GTP-bd"/>
</dbReference>
<dbReference type="NCBIfam" id="TIGR02729">
    <property type="entry name" value="Obg_CgtA"/>
    <property type="match status" value="1"/>
</dbReference>
<dbReference type="NCBIfam" id="TIGR03595">
    <property type="entry name" value="Obg_CgtA_exten"/>
    <property type="match status" value="1"/>
</dbReference>
<dbReference type="NCBIfam" id="NF008954">
    <property type="entry name" value="PRK12296.1"/>
    <property type="match status" value="1"/>
</dbReference>
<dbReference type="NCBIfam" id="NF008955">
    <property type="entry name" value="PRK12297.1"/>
    <property type="match status" value="1"/>
</dbReference>
<dbReference type="NCBIfam" id="NF008956">
    <property type="entry name" value="PRK12299.1"/>
    <property type="match status" value="1"/>
</dbReference>
<dbReference type="NCBIfam" id="TIGR00231">
    <property type="entry name" value="small_GTP"/>
    <property type="match status" value="1"/>
</dbReference>
<dbReference type="PANTHER" id="PTHR11702">
    <property type="entry name" value="DEVELOPMENTALLY REGULATED GTP-BINDING PROTEIN-RELATED"/>
    <property type="match status" value="1"/>
</dbReference>
<dbReference type="PANTHER" id="PTHR11702:SF31">
    <property type="entry name" value="MITOCHONDRIAL RIBOSOME-ASSOCIATED GTPASE 2"/>
    <property type="match status" value="1"/>
</dbReference>
<dbReference type="Pfam" id="PF09269">
    <property type="entry name" value="DUF1967"/>
    <property type="match status" value="1"/>
</dbReference>
<dbReference type="Pfam" id="PF01018">
    <property type="entry name" value="GTP1_OBG"/>
    <property type="match status" value="1"/>
</dbReference>
<dbReference type="Pfam" id="PF01926">
    <property type="entry name" value="MMR_HSR1"/>
    <property type="match status" value="1"/>
</dbReference>
<dbReference type="PIRSF" id="PIRSF002401">
    <property type="entry name" value="GTP_bd_Obg/CgtA"/>
    <property type="match status" value="1"/>
</dbReference>
<dbReference type="PRINTS" id="PR00326">
    <property type="entry name" value="GTP1OBG"/>
</dbReference>
<dbReference type="SUPFAM" id="SSF102741">
    <property type="entry name" value="Obg GTP-binding protein C-terminal domain"/>
    <property type="match status" value="1"/>
</dbReference>
<dbReference type="SUPFAM" id="SSF82051">
    <property type="entry name" value="Obg GTP-binding protein N-terminal domain"/>
    <property type="match status" value="1"/>
</dbReference>
<dbReference type="SUPFAM" id="SSF52540">
    <property type="entry name" value="P-loop containing nucleoside triphosphate hydrolases"/>
    <property type="match status" value="1"/>
</dbReference>
<dbReference type="PROSITE" id="PS51710">
    <property type="entry name" value="G_OBG"/>
    <property type="match status" value="1"/>
</dbReference>
<dbReference type="PROSITE" id="PS00905">
    <property type="entry name" value="GTP1_OBG"/>
    <property type="match status" value="1"/>
</dbReference>
<dbReference type="PROSITE" id="PS51883">
    <property type="entry name" value="OBG"/>
    <property type="match status" value="1"/>
</dbReference>
<dbReference type="PROSITE" id="PS51881">
    <property type="entry name" value="OCT"/>
    <property type="match status" value="1"/>
</dbReference>
<feature type="chain" id="PRO_0000386300" description="GTPase Obg">
    <location>
        <begin position="1"/>
        <end position="436"/>
    </location>
</feature>
<feature type="domain" description="Obg" evidence="3">
    <location>
        <begin position="2"/>
        <end position="160"/>
    </location>
</feature>
<feature type="domain" description="OBG-type G" evidence="1">
    <location>
        <begin position="161"/>
        <end position="338"/>
    </location>
</feature>
<feature type="domain" description="OCT" evidence="2">
    <location>
        <begin position="358"/>
        <end position="436"/>
    </location>
</feature>
<feature type="binding site" evidence="1">
    <location>
        <begin position="167"/>
        <end position="174"/>
    </location>
    <ligand>
        <name>GTP</name>
        <dbReference type="ChEBI" id="CHEBI:37565"/>
    </ligand>
</feature>
<feature type="binding site" evidence="1">
    <location>
        <position position="174"/>
    </location>
    <ligand>
        <name>Mg(2+)</name>
        <dbReference type="ChEBI" id="CHEBI:18420"/>
    </ligand>
</feature>
<feature type="binding site" evidence="1">
    <location>
        <begin position="192"/>
        <end position="196"/>
    </location>
    <ligand>
        <name>GTP</name>
        <dbReference type="ChEBI" id="CHEBI:37565"/>
    </ligand>
</feature>
<feature type="binding site" evidence="1">
    <location>
        <position position="194"/>
    </location>
    <ligand>
        <name>Mg(2+)</name>
        <dbReference type="ChEBI" id="CHEBI:18420"/>
    </ligand>
</feature>
<feature type="binding site" evidence="1">
    <location>
        <begin position="214"/>
        <end position="217"/>
    </location>
    <ligand>
        <name>GTP</name>
        <dbReference type="ChEBI" id="CHEBI:37565"/>
    </ligand>
</feature>
<feature type="binding site" evidence="1">
    <location>
        <begin position="284"/>
        <end position="287"/>
    </location>
    <ligand>
        <name>GTP</name>
        <dbReference type="ChEBI" id="CHEBI:37565"/>
    </ligand>
</feature>
<feature type="binding site" evidence="1">
    <location>
        <begin position="319"/>
        <end position="321"/>
    </location>
    <ligand>
        <name>GTP</name>
        <dbReference type="ChEBI" id="CHEBI:37565"/>
    </ligand>
</feature>
<proteinExistence type="inferred from homology"/>
<keyword id="KW-0963">Cytoplasm</keyword>
<keyword id="KW-0342">GTP-binding</keyword>
<keyword id="KW-0378">Hydrolase</keyword>
<keyword id="KW-0460">Magnesium</keyword>
<keyword id="KW-0479">Metal-binding</keyword>
<keyword id="KW-0547">Nucleotide-binding</keyword>
<accession>B2IQ29</accession>
<name>OBG_STRPS</name>
<gene>
    <name evidence="1" type="primary">obg</name>
    <name type="ordered locus">SPCG_1201</name>
</gene>
<comment type="function">
    <text evidence="1">An essential GTPase which binds GTP, GDP and possibly (p)ppGpp with moderate affinity, with high nucleotide exchange rates and a fairly low GTP hydrolysis rate. Plays a role in control of the cell cycle, stress response, ribosome biogenesis and in those bacteria that undergo differentiation, in morphogenesis control.</text>
</comment>
<comment type="cofactor">
    <cofactor evidence="1">
        <name>Mg(2+)</name>
        <dbReference type="ChEBI" id="CHEBI:18420"/>
    </cofactor>
</comment>
<comment type="subunit">
    <text evidence="1">Monomer.</text>
</comment>
<comment type="subcellular location">
    <subcellularLocation>
        <location evidence="1">Cytoplasm</location>
    </subcellularLocation>
</comment>
<comment type="similarity">
    <text evidence="1">Belongs to the TRAFAC class OBG-HflX-like GTPase superfamily. OBG GTPase family.</text>
</comment>
<reference key="1">
    <citation type="journal article" date="2009" name="BMC Genomics">
        <title>Genome evolution driven by host adaptations results in a more virulent and antimicrobial-resistant Streptococcus pneumoniae serotype 14.</title>
        <authorList>
            <person name="Ding F."/>
            <person name="Tang P."/>
            <person name="Hsu M.-H."/>
            <person name="Cui P."/>
            <person name="Hu S."/>
            <person name="Yu J."/>
            <person name="Chiu C.-H."/>
        </authorList>
    </citation>
    <scope>NUCLEOTIDE SEQUENCE [LARGE SCALE GENOMIC DNA]</scope>
    <source>
        <strain>CGSP14</strain>
    </source>
</reference>